<organism>
    <name type="scientific">Pongo abelii</name>
    <name type="common">Sumatran orangutan</name>
    <name type="synonym">Pongo pygmaeus abelii</name>
    <dbReference type="NCBI Taxonomy" id="9601"/>
    <lineage>
        <taxon>Eukaryota</taxon>
        <taxon>Metazoa</taxon>
        <taxon>Chordata</taxon>
        <taxon>Craniata</taxon>
        <taxon>Vertebrata</taxon>
        <taxon>Euteleostomi</taxon>
        <taxon>Mammalia</taxon>
        <taxon>Eutheria</taxon>
        <taxon>Euarchontoglires</taxon>
        <taxon>Primates</taxon>
        <taxon>Haplorrhini</taxon>
        <taxon>Catarrhini</taxon>
        <taxon>Hominidae</taxon>
        <taxon>Pongo</taxon>
    </lineage>
</organism>
<gene>
    <name type="primary">IL11RA</name>
</gene>
<name>I11RA_PONAB</name>
<reference key="1">
    <citation type="submission" date="2004-11" db="EMBL/GenBank/DDBJ databases">
        <authorList>
            <consortium name="The German cDNA consortium"/>
        </authorList>
    </citation>
    <scope>NUCLEOTIDE SEQUENCE [LARGE SCALE MRNA]</scope>
    <source>
        <tissue>Kidney</tissue>
    </source>
</reference>
<sequence length="422" mass="45298">MSSSCSGLSRVLVAVATALVSASSPCPQAWGPPGVQYGQPGRSVKLCCPGVTAGDPVSWFRDGEPKLLQGPDSGLGHELVLAQADSTDEGTYICRTLDGALGGTVTLQLGYPPARPVVSCQAADYENFSCTWSPSQISGLPTRYLTSYRKKTVLGADSQRRSPSTGPWPCPQDPLGAARCVVHGAEFWSQYRINVTEVNPLGASTRLLDVSLQSILRPDPPQGLRVESVPGYPRRLRASWTYPASWPRQPHFLLKFRLQYRPAQHPAWSTVEPAGLEEVITDAVAGLPHAVRVSARDFLDAGTWSTWSPEAWGTPSTGTVPKEIPAWGQLHTQPEVEPQVDSPAPPRPSLQPHPRLLDHRDSVEQVAVLVSLGILSFLGLVAGALALGLWLRLRRGGKDGSPKPGFLASVIPVDRHPGAPNL</sequence>
<evidence type="ECO:0000250" key="1">
    <source>
        <dbReference type="UniProtKB" id="Q14626"/>
    </source>
</evidence>
<evidence type="ECO:0000255" key="2"/>
<evidence type="ECO:0000255" key="3">
    <source>
        <dbReference type="PROSITE-ProRule" id="PRU00114"/>
    </source>
</evidence>
<evidence type="ECO:0000255" key="4">
    <source>
        <dbReference type="PROSITE-ProRule" id="PRU00316"/>
    </source>
</evidence>
<evidence type="ECO:0000256" key="5">
    <source>
        <dbReference type="SAM" id="MobiDB-lite"/>
    </source>
</evidence>
<evidence type="ECO:0000305" key="6"/>
<feature type="signal peptide" evidence="2">
    <location>
        <begin position="1"/>
        <end position="22"/>
    </location>
</feature>
<feature type="chain" id="PRO_0000229037" description="Interleukin-11 receptor subunit alpha">
    <location>
        <begin position="23"/>
        <end position="422"/>
    </location>
</feature>
<feature type="chain" id="PRO_0000450690" description="Soluble interleukin-11 receptor subunit alpha">
    <location>
        <begin position="23"/>
        <end status="unknown"/>
    </location>
</feature>
<feature type="topological domain" description="Extracellular" evidence="2">
    <location>
        <begin position="24"/>
        <end position="370"/>
    </location>
</feature>
<feature type="transmembrane region" description="Helical" evidence="2">
    <location>
        <begin position="371"/>
        <end position="391"/>
    </location>
</feature>
<feature type="topological domain" description="Cytoplasmic" evidence="2">
    <location>
        <begin position="392"/>
        <end position="422"/>
    </location>
</feature>
<feature type="domain" description="Ig-like C2-type">
    <location>
        <begin position="27"/>
        <end position="110"/>
    </location>
</feature>
<feature type="domain" description="Fibronectin type-III 1" evidence="4">
    <location>
        <begin position="112"/>
        <end position="219"/>
    </location>
</feature>
<feature type="domain" description="Fibronectin type-III 2" evidence="4">
    <location>
        <begin position="220"/>
        <end position="317"/>
    </location>
</feature>
<feature type="region of interest" description="Disordered" evidence="5">
    <location>
        <begin position="335"/>
        <end position="355"/>
    </location>
</feature>
<feature type="short sequence motif" description="WSXWS motif">
    <location>
        <begin position="304"/>
        <end position="308"/>
    </location>
</feature>
<feature type="glycosylation site" description="N-linked (GlcNAc...) asparagine" evidence="2">
    <location>
        <position position="127"/>
    </location>
</feature>
<feature type="glycosylation site" description="N-linked (GlcNAc...) asparagine" evidence="2">
    <location>
        <position position="194"/>
    </location>
</feature>
<feature type="disulfide bond" evidence="3">
    <location>
        <begin position="48"/>
        <end position="94"/>
    </location>
</feature>
<feature type="disulfide bond" evidence="3">
    <location>
        <begin position="120"/>
        <end position="130"/>
    </location>
</feature>
<feature type="disulfide bond" evidence="3">
    <location>
        <begin position="170"/>
        <end position="180"/>
    </location>
</feature>
<accession>Q5RF19</accession>
<proteinExistence type="evidence at transcript level"/>
<dbReference type="EMBL" id="CR857342">
    <property type="protein sequence ID" value="CAH89638.1"/>
    <property type="molecule type" value="mRNA"/>
</dbReference>
<dbReference type="RefSeq" id="NP_001128982.1">
    <property type="nucleotide sequence ID" value="NM_001135510.1"/>
</dbReference>
<dbReference type="RefSeq" id="XP_054375547.1">
    <property type="nucleotide sequence ID" value="XM_054519572.2"/>
</dbReference>
<dbReference type="RefSeq" id="XP_054375549.1">
    <property type="nucleotide sequence ID" value="XM_054519574.2"/>
</dbReference>
<dbReference type="SMR" id="Q5RF19"/>
<dbReference type="FunCoup" id="Q5RF19">
    <property type="interactions" value="437"/>
</dbReference>
<dbReference type="STRING" id="9601.ENSPPYP00000021420"/>
<dbReference type="GlyCosmos" id="Q5RF19">
    <property type="glycosylation" value="2 sites, No reported glycans"/>
</dbReference>
<dbReference type="GeneID" id="100190822"/>
<dbReference type="KEGG" id="pon:100190822"/>
<dbReference type="CTD" id="3590"/>
<dbReference type="eggNOG" id="ENOG502R7G6">
    <property type="taxonomic scope" value="Eukaryota"/>
</dbReference>
<dbReference type="HOGENOM" id="CLU_047259_0_1_1"/>
<dbReference type="InParanoid" id="Q5RF19"/>
<dbReference type="OrthoDB" id="418412at2759"/>
<dbReference type="TreeFam" id="TF331210"/>
<dbReference type="Proteomes" id="UP000001595">
    <property type="component" value="Chromosome 9"/>
</dbReference>
<dbReference type="GO" id="GO:0005576">
    <property type="term" value="C:extracellular region"/>
    <property type="evidence" value="ECO:0007669"/>
    <property type="project" value="UniProtKB-SubCell"/>
</dbReference>
<dbReference type="GO" id="GO:0016020">
    <property type="term" value="C:membrane"/>
    <property type="evidence" value="ECO:0007669"/>
    <property type="project" value="UniProtKB-SubCell"/>
</dbReference>
<dbReference type="GO" id="GO:0004896">
    <property type="term" value="F:cytokine receptor activity"/>
    <property type="evidence" value="ECO:0007669"/>
    <property type="project" value="InterPro"/>
</dbReference>
<dbReference type="GO" id="GO:0032502">
    <property type="term" value="P:developmental process"/>
    <property type="evidence" value="ECO:0000250"/>
    <property type="project" value="UniProtKB"/>
</dbReference>
<dbReference type="GO" id="GO:0060322">
    <property type="term" value="P:head development"/>
    <property type="evidence" value="ECO:0000250"/>
    <property type="project" value="UniProtKB"/>
</dbReference>
<dbReference type="CDD" id="cd00063">
    <property type="entry name" value="FN3"/>
    <property type="match status" value="1"/>
</dbReference>
<dbReference type="FunFam" id="2.60.40.10:FF:004841">
    <property type="match status" value="1"/>
</dbReference>
<dbReference type="FunFam" id="2.60.40.10:FF:000136">
    <property type="entry name" value="Ciliary neurotrophic factor receptor alpha"/>
    <property type="match status" value="1"/>
</dbReference>
<dbReference type="FunFam" id="2.60.40.10:FF:000545">
    <property type="entry name" value="Interleukin-11 receptor subunit alpha"/>
    <property type="match status" value="1"/>
</dbReference>
<dbReference type="Gene3D" id="2.60.40.10">
    <property type="entry name" value="Immunoglobulins"/>
    <property type="match status" value="3"/>
</dbReference>
<dbReference type="InterPro" id="IPR003961">
    <property type="entry name" value="FN3_dom"/>
</dbReference>
<dbReference type="InterPro" id="IPR036116">
    <property type="entry name" value="FN3_sf"/>
</dbReference>
<dbReference type="InterPro" id="IPR003530">
    <property type="entry name" value="Hematopoietin_rcpt_L_F3_CS"/>
</dbReference>
<dbReference type="InterPro" id="IPR007110">
    <property type="entry name" value="Ig-like_dom"/>
</dbReference>
<dbReference type="InterPro" id="IPR036179">
    <property type="entry name" value="Ig-like_dom_sf"/>
</dbReference>
<dbReference type="InterPro" id="IPR013783">
    <property type="entry name" value="Ig-like_fold"/>
</dbReference>
<dbReference type="InterPro" id="IPR003599">
    <property type="entry name" value="Ig_sub"/>
</dbReference>
<dbReference type="InterPro" id="IPR053073">
    <property type="entry name" value="IL11/IL27_subunit_beta"/>
</dbReference>
<dbReference type="PANTHER" id="PTHR48483">
    <property type="entry name" value="INTERLEUKIN-27 SUBUNIT BETA"/>
    <property type="match status" value="1"/>
</dbReference>
<dbReference type="PANTHER" id="PTHR48483:SF2">
    <property type="entry name" value="INTERLEUKIN-27 SUBUNIT BETA"/>
    <property type="match status" value="1"/>
</dbReference>
<dbReference type="SMART" id="SM00060">
    <property type="entry name" value="FN3"/>
    <property type="match status" value="2"/>
</dbReference>
<dbReference type="SMART" id="SM00409">
    <property type="entry name" value="IG"/>
    <property type="match status" value="1"/>
</dbReference>
<dbReference type="SUPFAM" id="SSF49265">
    <property type="entry name" value="Fibronectin type III"/>
    <property type="match status" value="2"/>
</dbReference>
<dbReference type="SUPFAM" id="SSF48726">
    <property type="entry name" value="Immunoglobulin"/>
    <property type="match status" value="1"/>
</dbReference>
<dbReference type="PROSITE" id="PS50853">
    <property type="entry name" value="FN3"/>
    <property type="match status" value="2"/>
</dbReference>
<dbReference type="PROSITE" id="PS01354">
    <property type="entry name" value="HEMATOPO_REC_L_F3"/>
    <property type="match status" value="1"/>
</dbReference>
<dbReference type="PROSITE" id="PS50835">
    <property type="entry name" value="IG_LIKE"/>
    <property type="match status" value="1"/>
</dbReference>
<protein>
    <recommendedName>
        <fullName>Interleukin-11 receptor subunit alpha</fullName>
        <shortName>IL-11 receptor subunit alpha</shortName>
        <shortName>IL-11R subunit alpha</shortName>
        <shortName>IL-11R-alpha</shortName>
        <shortName>IL-11RA</shortName>
    </recommendedName>
    <component>
        <recommendedName>
            <fullName evidence="6">Soluble interleukin-11 receptor subunit alpha</fullName>
            <shortName>sIL-11R</shortName>
            <shortName>sIL-11RA</shortName>
            <shortName evidence="6">sIL11RA</shortName>
        </recommendedName>
    </component>
</protein>
<keyword id="KW-1015">Disulfide bond</keyword>
<keyword id="KW-0325">Glycoprotein</keyword>
<keyword id="KW-0393">Immunoglobulin domain</keyword>
<keyword id="KW-0472">Membrane</keyword>
<keyword id="KW-0675">Receptor</keyword>
<keyword id="KW-1185">Reference proteome</keyword>
<keyword id="KW-0677">Repeat</keyword>
<keyword id="KW-0964">Secreted</keyword>
<keyword id="KW-0732">Signal</keyword>
<keyword id="KW-0812">Transmembrane</keyword>
<keyword id="KW-1133">Transmembrane helix</keyword>
<comment type="function">
    <text evidence="1">Receptor for interleukin-11 (IL11). The receptor systems for IL6, LIF, OSM, CNTF, IL11 and CT1 can utilize IL6ST for initiating signal transmission. The IL11/IL11RA/IL6ST complex may be involved in the control of proliferation and/or differentiation of skeletogenic progenitor or other mesenchymal cells. Essential for the normal development of craniofacial bones and teeth. Restricts suture fusion and tooth number.</text>
</comment>
<comment type="function">
    <molecule>Soluble interleukin-11 receptor subunit alpha</molecule>
    <text evidence="1">Soluble form of IL11 receptor (sIL11RA) that acts as an agonist of IL11 activity. The IL11:sIL11RA complex binds to IL6ST/gp130 on cell surfaces and induces signaling also on cells that do not express membrane-bound IL11RA in a process called IL11 trans-signaling.</text>
</comment>
<comment type="subunit">
    <text evidence="1">On IL11 binding, forms a multimer complex with IL6ST/gp130.</text>
</comment>
<comment type="subcellular location">
    <molecule>Interleukin-11 receptor subunit alpha</molecule>
    <subcellularLocation>
        <location evidence="1">Membrane</location>
        <topology evidence="2">Single-pass type I membrane protein</topology>
    </subcellularLocation>
</comment>
<comment type="subcellular location">
    <molecule>Soluble interleukin-11 receptor subunit alpha</molecule>
    <subcellularLocation>
        <location evidence="1">Secreted</location>
    </subcellularLocation>
</comment>
<comment type="PTM">
    <text evidence="1">A short soluble form is also released from the membrane by proteolysis. The sIL11RA is formed either by limited proteolysis of membrane-bound receptors, a process referred to as ectodomain shedding, or directly secreted from the cells after alternative mRNA splicing. mIL11RA is cleaved by the proteases ADAM10, ELANE and PRTN3.</text>
</comment>
<comment type="similarity">
    <text evidence="6">Belongs to the type I cytokine receptor family. Type 3 subfamily.</text>
</comment>